<evidence type="ECO:0000250" key="1">
    <source>
        <dbReference type="UniProtKB" id="P35520"/>
    </source>
</evidence>
<evidence type="ECO:0000255" key="2">
    <source>
        <dbReference type="PROSITE-ProRule" id="PRU00703"/>
    </source>
</evidence>
<evidence type="ECO:0000269" key="3">
    <source>
    </source>
</evidence>
<evidence type="ECO:0000303" key="4">
    <source>
    </source>
</evidence>
<evidence type="ECO:0000305" key="5"/>
<evidence type="ECO:0000312" key="6">
    <source>
        <dbReference type="EMBL" id="BAE66603.1"/>
    </source>
</evidence>
<evidence type="ECO:0007744" key="7">
    <source>
        <dbReference type="PDB" id="5OHX"/>
    </source>
</evidence>
<evidence type="ECO:0007829" key="8">
    <source>
        <dbReference type="PDB" id="5OHX"/>
    </source>
</evidence>
<feature type="chain" id="PRO_0000451741" description="Cystathionine beta-synthase">
    <location>
        <begin position="1"/>
        <end position="504"/>
    </location>
</feature>
<feature type="domain" description="CBS 1" evidence="2">
    <location>
        <begin position="375"/>
        <end position="434"/>
    </location>
</feature>
<feature type="domain" description="CBS 2" evidence="2">
    <location>
        <begin position="442"/>
        <end position="498"/>
    </location>
</feature>
<feature type="binding site" description="axial binding residue" evidence="3">
    <location>
        <position position="12"/>
    </location>
    <ligand>
        <name>heme</name>
        <dbReference type="ChEBI" id="CHEBI:30413"/>
    </ligand>
    <ligandPart>
        <name>Fe</name>
        <dbReference type="ChEBI" id="CHEBI:18248"/>
    </ligandPart>
</feature>
<feature type="binding site" description="axial binding residue" evidence="3">
    <location>
        <position position="23"/>
    </location>
    <ligand>
        <name>heme</name>
        <dbReference type="ChEBI" id="CHEBI:30413"/>
    </ligand>
    <ligandPart>
        <name>Fe</name>
        <dbReference type="ChEBI" id="CHEBI:18248"/>
    </ligandPart>
</feature>
<feature type="binding site" evidence="3">
    <location>
        <position position="108"/>
    </location>
    <ligand>
        <name>pyridoxal 5'-phosphate</name>
        <dbReference type="ChEBI" id="CHEBI:597326"/>
    </ligand>
</feature>
<feature type="binding site" evidence="3">
    <location>
        <begin position="215"/>
        <end position="219"/>
    </location>
    <ligand>
        <name>pyridoxal 5'-phosphate</name>
        <dbReference type="ChEBI" id="CHEBI:597326"/>
    </ligand>
</feature>
<feature type="binding site" evidence="3">
    <location>
        <position position="307"/>
    </location>
    <ligand>
        <name>pyridoxal 5'-phosphate</name>
        <dbReference type="ChEBI" id="CHEBI:597326"/>
    </ligand>
</feature>
<feature type="modified residue" description="N6-(pyridoxal phosphate)lysine" evidence="3">
    <location>
        <position position="78"/>
    </location>
</feature>
<feature type="strand" evidence="8">
    <location>
        <begin position="36"/>
        <end position="38"/>
    </location>
</feature>
<feature type="helix" evidence="8">
    <location>
        <begin position="39"/>
        <end position="42"/>
    </location>
</feature>
<feature type="strand" evidence="8">
    <location>
        <begin position="48"/>
        <end position="50"/>
    </location>
</feature>
<feature type="helix" evidence="8">
    <location>
        <begin position="53"/>
        <end position="57"/>
    </location>
</feature>
<feature type="strand" evidence="8">
    <location>
        <begin position="62"/>
        <end position="68"/>
    </location>
</feature>
<feature type="strand" evidence="8">
    <location>
        <begin position="75"/>
        <end position="77"/>
    </location>
</feature>
<feature type="helix" evidence="8">
    <location>
        <begin position="78"/>
        <end position="91"/>
    </location>
</feature>
<feature type="strand" evidence="8">
    <location>
        <begin position="100"/>
        <end position="103"/>
    </location>
</feature>
<feature type="helix" evidence="8">
    <location>
        <begin position="108"/>
        <end position="120"/>
    </location>
</feature>
<feature type="strand" evidence="8">
    <location>
        <begin position="123"/>
        <end position="127"/>
    </location>
</feature>
<feature type="helix" evidence="8">
    <location>
        <begin position="136"/>
        <end position="142"/>
    </location>
</feature>
<feature type="strand" evidence="8">
    <location>
        <begin position="145"/>
        <end position="148"/>
    </location>
</feature>
<feature type="helix" evidence="8">
    <location>
        <begin position="162"/>
        <end position="172"/>
    </location>
</feature>
<feature type="strand" evidence="8">
    <location>
        <begin position="176"/>
        <end position="178"/>
    </location>
</feature>
<feature type="turn" evidence="8">
    <location>
        <begin position="181"/>
        <end position="183"/>
    </location>
</feature>
<feature type="helix" evidence="8">
    <location>
        <begin position="186"/>
        <end position="193"/>
    </location>
</feature>
<feature type="helix" evidence="8">
    <location>
        <begin position="195"/>
        <end position="202"/>
    </location>
</feature>
<feature type="turn" evidence="8">
    <location>
        <begin position="203"/>
        <end position="205"/>
    </location>
</feature>
<feature type="strand" evidence="8">
    <location>
        <begin position="209"/>
        <end position="213"/>
    </location>
</feature>
<feature type="strand" evidence="8">
    <location>
        <begin position="215"/>
        <end position="217"/>
    </location>
</feature>
<feature type="helix" evidence="8">
    <location>
        <begin position="218"/>
        <end position="230"/>
    </location>
</feature>
<feature type="strand" evidence="8">
    <location>
        <begin position="235"/>
        <end position="241"/>
    </location>
</feature>
<feature type="strand" evidence="8">
    <location>
        <begin position="280"/>
        <end position="284"/>
    </location>
</feature>
<feature type="helix" evidence="8">
    <location>
        <begin position="286"/>
        <end position="300"/>
    </location>
</feature>
<feature type="helix" evidence="8">
    <location>
        <begin position="306"/>
        <end position="318"/>
    </location>
</feature>
<feature type="helix" evidence="8">
    <location>
        <begin position="319"/>
        <end position="321"/>
    </location>
</feature>
<feature type="strand" evidence="8">
    <location>
        <begin position="327"/>
        <end position="332"/>
    </location>
</feature>
<feature type="turn" evidence="8">
    <location>
        <begin position="336"/>
        <end position="343"/>
    </location>
</feature>
<feature type="helix" evidence="8">
    <location>
        <begin position="346"/>
        <end position="351"/>
    </location>
</feature>
<feature type="helix" evidence="8">
    <location>
        <begin position="362"/>
        <end position="366"/>
    </location>
</feature>
<feature type="helix" evidence="8">
    <location>
        <begin position="372"/>
        <end position="374"/>
    </location>
</feature>
<feature type="helix" evidence="8">
    <location>
        <begin position="390"/>
        <end position="399"/>
    </location>
</feature>
<feature type="strand" evidence="8">
    <location>
        <begin position="401"/>
        <end position="403"/>
    </location>
</feature>
<feature type="strand" evidence="8">
    <location>
        <begin position="405"/>
        <end position="407"/>
    </location>
</feature>
<feature type="strand" evidence="8">
    <location>
        <begin position="409"/>
        <end position="413"/>
    </location>
</feature>
<feature type="strand" evidence="8">
    <location>
        <begin position="416"/>
        <end position="418"/>
    </location>
</feature>
<feature type="helix" evidence="8">
    <location>
        <begin position="420"/>
        <end position="429"/>
    </location>
</feature>
<feature type="strand" evidence="8">
    <location>
        <begin position="430"/>
        <end position="432"/>
    </location>
</feature>
<feature type="helix" evidence="8">
    <location>
        <begin position="438"/>
        <end position="441"/>
    </location>
</feature>
<feature type="strand" evidence="8">
    <location>
        <begin position="448"/>
        <end position="450"/>
    </location>
</feature>
<feature type="helix" evidence="8">
    <location>
        <begin position="455"/>
        <end position="461"/>
    </location>
</feature>
<feature type="turn" evidence="8">
    <location>
        <begin position="462"/>
        <end position="464"/>
    </location>
</feature>
<feature type="strand" evidence="8">
    <location>
        <begin position="468"/>
        <end position="472"/>
    </location>
</feature>
<feature type="turn" evidence="8">
    <location>
        <begin position="473"/>
        <end position="477"/>
    </location>
</feature>
<feature type="strand" evidence="8">
    <location>
        <begin position="478"/>
        <end position="483"/>
    </location>
</feature>
<feature type="helix" evidence="8">
    <location>
        <begin position="485"/>
        <end position="493"/>
    </location>
</feature>
<organism evidence="6">
    <name type="scientific">Apis mellifera</name>
    <name type="common">Honeybee</name>
    <dbReference type="NCBI Taxonomy" id="7460"/>
    <lineage>
        <taxon>Eukaryota</taxon>
        <taxon>Metazoa</taxon>
        <taxon>Ecdysozoa</taxon>
        <taxon>Arthropoda</taxon>
        <taxon>Hexapoda</taxon>
        <taxon>Insecta</taxon>
        <taxon>Pterygota</taxon>
        <taxon>Neoptera</taxon>
        <taxon>Endopterygota</taxon>
        <taxon>Hymenoptera</taxon>
        <taxon>Apocrita</taxon>
        <taxon>Aculeata</taxon>
        <taxon>Apoidea</taxon>
        <taxon>Anthophila</taxon>
        <taxon>Apidae</taxon>
        <taxon>Apis</taxon>
    </lineage>
</organism>
<reference evidence="6" key="1">
    <citation type="submission" date="2005-12" db="EMBL/GenBank/DDBJ databases">
        <title>Molecular cloning of NOS, sGC, CBS and HO genes in Honey bee brain.</title>
        <authorList>
            <person name="Watanabe T."/>
            <person name="Shiga T."/>
            <person name="Yamamoto T."/>
            <person name="Suzuki N."/>
            <person name="Ito E."/>
        </authorList>
    </citation>
    <scope>NUCLEOTIDE SEQUENCE [MRNA]</scope>
    <source>
        <tissue evidence="6">Brain</tissue>
    </source>
</reference>
<reference evidence="7" key="2">
    <citation type="journal article" date="2018" name="J. Struct. Biol.">
        <title>Crystal structure of cystathionine beta-synthase from honeybee Apis mellifera.</title>
        <authorList>
            <person name="Gimenez-Mascarell P."/>
            <person name="Majtan T."/>
            <person name="Oyenarte I."/>
            <person name="Ereno-Orbea J."/>
            <person name="Majtan J."/>
            <person name="Klaudiny J."/>
            <person name="Kraus J.P."/>
            <person name="Martinez-Cruz L.A."/>
        </authorList>
    </citation>
    <scope>X-RAY CRYSTALLOGRAPHY (3.20 ANGSTROMS) IN COMPLEX WITH PYRIDOXAL PHOSPHATE AND HEME</scope>
    <scope>FUNCTION</scope>
    <scope>CATALYTIC ACTIVITY</scope>
    <scope>ACTIVITY REGULATION</scope>
    <scope>PATHWAY</scope>
    <scope>SUBUNIT</scope>
</reference>
<protein>
    <recommendedName>
        <fullName evidence="4">Cystathionine beta-synthase</fullName>
        <ecNumber evidence="3">4.2.1.22</ecNumber>
    </recommendedName>
</protein>
<name>CBS_APIME</name>
<keyword id="KW-0002">3D-structure</keyword>
<keyword id="KW-0028">Amino-acid biosynthesis</keyword>
<keyword id="KW-0129">CBS domain</keyword>
<keyword id="KW-0198">Cysteine biosynthesis</keyword>
<keyword id="KW-0349">Heme</keyword>
<keyword id="KW-0408">Iron</keyword>
<keyword id="KW-1017">Isopeptide bond</keyword>
<keyword id="KW-0456">Lyase</keyword>
<keyword id="KW-0479">Metal-binding</keyword>
<keyword id="KW-0663">Pyridoxal phosphate</keyword>
<keyword id="KW-1185">Reference proteome</keyword>
<dbReference type="EC" id="4.2.1.22" evidence="3"/>
<dbReference type="EMBL" id="AB244761">
    <property type="protein sequence ID" value="BAE66603.1"/>
    <property type="molecule type" value="mRNA"/>
</dbReference>
<dbReference type="RefSeq" id="NP_001035353.1">
    <property type="nucleotide sequence ID" value="NM_001040263.1"/>
</dbReference>
<dbReference type="PDB" id="5OHX">
    <property type="method" value="X-ray"/>
    <property type="resolution" value="3.20 A"/>
    <property type="chains" value="A/B=1-504"/>
</dbReference>
<dbReference type="PDBsum" id="5OHX"/>
<dbReference type="SMR" id="Q2V0C9"/>
<dbReference type="FunCoup" id="Q2V0C9">
    <property type="interactions" value="265"/>
</dbReference>
<dbReference type="EnsemblMetazoa" id="NM_001040263">
    <property type="protein sequence ID" value="NP_001035353"/>
    <property type="gene ID" value="GeneID_551341"/>
</dbReference>
<dbReference type="GeneID" id="551341"/>
<dbReference type="KEGG" id="ame:551341"/>
<dbReference type="CTD" id="875"/>
<dbReference type="InParanoid" id="Q2V0C9"/>
<dbReference type="OrthoDB" id="728at2759"/>
<dbReference type="PhylomeDB" id="Q2V0C9"/>
<dbReference type="BRENDA" id="4.2.1.22">
    <property type="organism ID" value="387"/>
</dbReference>
<dbReference type="UniPathway" id="UPA00136">
    <property type="reaction ID" value="UER00201"/>
</dbReference>
<dbReference type="Proteomes" id="UP000005203">
    <property type="component" value="Linkage group LG4"/>
</dbReference>
<dbReference type="GO" id="GO:0005737">
    <property type="term" value="C:cytoplasm"/>
    <property type="evidence" value="ECO:0007669"/>
    <property type="project" value="InterPro"/>
</dbReference>
<dbReference type="GO" id="GO:0004122">
    <property type="term" value="F:cystathionine beta-synthase activity"/>
    <property type="evidence" value="ECO:0007669"/>
    <property type="project" value="UniProtKB-EC"/>
</dbReference>
<dbReference type="GO" id="GO:0020037">
    <property type="term" value="F:heme binding"/>
    <property type="evidence" value="ECO:0000314"/>
    <property type="project" value="UniProtKB"/>
</dbReference>
<dbReference type="GO" id="GO:0046872">
    <property type="term" value="F:metal ion binding"/>
    <property type="evidence" value="ECO:0007669"/>
    <property type="project" value="UniProtKB-KW"/>
</dbReference>
<dbReference type="GO" id="GO:0030170">
    <property type="term" value="F:pyridoxal phosphate binding"/>
    <property type="evidence" value="ECO:0000314"/>
    <property type="project" value="UniProtKB"/>
</dbReference>
<dbReference type="GO" id="GO:0006535">
    <property type="term" value="P:cysteine biosynthetic process from serine"/>
    <property type="evidence" value="ECO:0000314"/>
    <property type="project" value="UniProtKB"/>
</dbReference>
<dbReference type="GO" id="GO:0019343">
    <property type="term" value="P:cysteine biosynthetic process via cystathionine"/>
    <property type="evidence" value="ECO:0000314"/>
    <property type="project" value="UniProtKB"/>
</dbReference>
<dbReference type="CDD" id="cd01561">
    <property type="entry name" value="CBS_like"/>
    <property type="match status" value="1"/>
</dbReference>
<dbReference type="FunFam" id="3.40.50.1100:FF:000003">
    <property type="entry name" value="Cystathionine beta-synthase"/>
    <property type="match status" value="1"/>
</dbReference>
<dbReference type="FunFam" id="3.40.50.1100:FF:000118">
    <property type="entry name" value="Related to CYS4-cystathionine beta-synthase"/>
    <property type="match status" value="1"/>
</dbReference>
<dbReference type="Gene3D" id="3.40.50.1100">
    <property type="match status" value="2"/>
</dbReference>
<dbReference type="Gene3D" id="3.10.580.10">
    <property type="entry name" value="CBS-domain"/>
    <property type="match status" value="1"/>
</dbReference>
<dbReference type="InterPro" id="IPR046342">
    <property type="entry name" value="CBS_dom_sf"/>
</dbReference>
<dbReference type="InterPro" id="IPR050214">
    <property type="entry name" value="Cys_Synth/Cystath_Beta-Synth"/>
</dbReference>
<dbReference type="InterPro" id="IPR005857">
    <property type="entry name" value="Cysta_beta_synth"/>
</dbReference>
<dbReference type="InterPro" id="IPR001216">
    <property type="entry name" value="P-phosphate_BS"/>
</dbReference>
<dbReference type="InterPro" id="IPR001926">
    <property type="entry name" value="TrpB-like_PALP"/>
</dbReference>
<dbReference type="InterPro" id="IPR036052">
    <property type="entry name" value="TrpB-like_PALP_sf"/>
</dbReference>
<dbReference type="NCBIfam" id="TIGR01137">
    <property type="entry name" value="cysta_beta"/>
    <property type="match status" value="1"/>
</dbReference>
<dbReference type="PANTHER" id="PTHR10314">
    <property type="entry name" value="CYSTATHIONINE BETA-SYNTHASE"/>
    <property type="match status" value="1"/>
</dbReference>
<dbReference type="Pfam" id="PF00291">
    <property type="entry name" value="PALP"/>
    <property type="match status" value="1"/>
</dbReference>
<dbReference type="SUPFAM" id="SSF54631">
    <property type="entry name" value="CBS-domain pair"/>
    <property type="match status" value="1"/>
</dbReference>
<dbReference type="SUPFAM" id="SSF53686">
    <property type="entry name" value="Tryptophan synthase beta subunit-like PLP-dependent enzymes"/>
    <property type="match status" value="1"/>
</dbReference>
<dbReference type="PROSITE" id="PS00901">
    <property type="entry name" value="CYS_SYNTHASE"/>
    <property type="match status" value="1"/>
</dbReference>
<comment type="function">
    <text evidence="3">Hydro-lyase catalyzing the first step of the transsulfuration pathway, where the hydroxyl group of L-serine is displaced by L-homocysteine in a beta-replacement reaction to form L-cystathionine, the precursor of L-cysteine.</text>
</comment>
<comment type="catalytic activity">
    <reaction evidence="3">
        <text>L-homocysteine + L-serine = L,L-cystathionine + H2O</text>
        <dbReference type="Rhea" id="RHEA:10112"/>
        <dbReference type="ChEBI" id="CHEBI:15377"/>
        <dbReference type="ChEBI" id="CHEBI:33384"/>
        <dbReference type="ChEBI" id="CHEBI:58161"/>
        <dbReference type="ChEBI" id="CHEBI:58199"/>
        <dbReference type="EC" id="4.2.1.22"/>
    </reaction>
</comment>
<comment type="cofactor">
    <cofactor evidence="1">
        <name>pyridoxal 5'-phosphate</name>
        <dbReference type="ChEBI" id="CHEBI:597326"/>
    </cofactor>
</comment>
<comment type="activity regulation">
    <text evidence="1 3">Has no response to S-adenosyl-methionine/AdoMet, unlike mammalian orthologs (PubMed:29275181). Binds non-covalently to a heme group that may control the redox sensitivity of the enzyme (By similarity).</text>
</comment>
<comment type="pathway">
    <text evidence="3">Amino-acid biosynthesis; L-cysteine biosynthesis; L-cysteine from L-homocysteine and L-serine: step 1/2.</text>
</comment>
<comment type="subunit">
    <text evidence="3">Homodimer.</text>
</comment>
<comment type="similarity">
    <text evidence="5">Belongs to the cysteine synthase/cystathionine beta-synthase family.</text>
</comment>
<accession>Q2V0C9</accession>
<sequence>MEFKQPNRPSYCTWELNATNSPHTCRTKNGDYTKIMPDILTAIGQTPLIKLNNIPKSYGIKCEIYAKCEFLNPGGSVKDRIAYRMIQDAEDKGLLKPGCTIIEPTSGNTGIGLAMAAAVRGYKCIIVMPEKMSDEKISTLYALGAKIIRTPTEASWHSPEAHISVAQKLQKEIPNSIILDQYTNPGNPLAHYDQTAIEIWKQCEGKIDYLVAGAGTGGTISGIGRKLKELSPNIKIIAVDPKGSILDPSSDSQNEVGFYEVEGIGYDFIPTVLDRNVIDKWIKTEDNESLNAARMLIRQEGLLCGGSSGAALIAALKIAKDIPEEKRMVIILPDGIRNYLTKFVSEYWMETRGFLQPVCQNEMNKWWWNMKISNLSFDKQSLLKENTVTCQEAMHMLKNADSQLLVISDDNIHIKGVISLNKLTSYVISGIVKCTDFVDKAMVKQYVKVKHSATLGYISRVLEKEPYVIILDDEHDDAFIGIVNQFHILQFITKNGTSNNYLIN</sequence>
<proteinExistence type="evidence at protein level"/>
<gene>
    <name evidence="4" type="primary">CBS</name>
</gene>